<evidence type="ECO:0000255" key="1">
    <source>
        <dbReference type="HAMAP-Rule" id="MF_01225"/>
    </source>
</evidence>
<evidence type="ECO:0000255" key="2">
    <source>
        <dbReference type="PROSITE-ProRule" id="PRU01266"/>
    </source>
</evidence>
<keyword id="KW-0004">4Fe-4S</keyword>
<keyword id="KW-0342">GTP-binding</keyword>
<keyword id="KW-0408">Iron</keyword>
<keyword id="KW-0411">Iron-sulfur</keyword>
<keyword id="KW-0456">Lyase</keyword>
<keyword id="KW-0479">Metal-binding</keyword>
<keyword id="KW-0501">Molybdenum cofactor biosynthesis</keyword>
<keyword id="KW-0547">Nucleotide-binding</keyword>
<keyword id="KW-1185">Reference proteome</keyword>
<keyword id="KW-0949">S-adenosyl-L-methionine</keyword>
<feature type="chain" id="PRO_1000054224" description="GTP 3',8-cyclase">
    <location>
        <begin position="1"/>
        <end position="329"/>
    </location>
</feature>
<feature type="domain" description="Radical SAM core" evidence="2">
    <location>
        <begin position="8"/>
        <end position="234"/>
    </location>
</feature>
<feature type="binding site" evidence="1">
    <location>
        <position position="17"/>
    </location>
    <ligand>
        <name>GTP</name>
        <dbReference type="ChEBI" id="CHEBI:37565"/>
    </ligand>
</feature>
<feature type="binding site" evidence="1">
    <location>
        <position position="24"/>
    </location>
    <ligand>
        <name>[4Fe-4S] cluster</name>
        <dbReference type="ChEBI" id="CHEBI:49883"/>
        <label>1</label>
        <note>4Fe-4S-S-AdoMet</note>
    </ligand>
</feature>
<feature type="binding site" evidence="1">
    <location>
        <position position="28"/>
    </location>
    <ligand>
        <name>[4Fe-4S] cluster</name>
        <dbReference type="ChEBI" id="CHEBI:49883"/>
        <label>1</label>
        <note>4Fe-4S-S-AdoMet</note>
    </ligand>
</feature>
<feature type="binding site" evidence="1">
    <location>
        <position position="30"/>
    </location>
    <ligand>
        <name>S-adenosyl-L-methionine</name>
        <dbReference type="ChEBI" id="CHEBI:59789"/>
    </ligand>
</feature>
<feature type="binding site" evidence="1">
    <location>
        <position position="31"/>
    </location>
    <ligand>
        <name>[4Fe-4S] cluster</name>
        <dbReference type="ChEBI" id="CHEBI:49883"/>
        <label>1</label>
        <note>4Fe-4S-S-AdoMet</note>
    </ligand>
</feature>
<feature type="binding site" evidence="1">
    <location>
        <position position="68"/>
    </location>
    <ligand>
        <name>GTP</name>
        <dbReference type="ChEBI" id="CHEBI:37565"/>
    </ligand>
</feature>
<feature type="binding site" evidence="1">
    <location>
        <position position="72"/>
    </location>
    <ligand>
        <name>S-adenosyl-L-methionine</name>
        <dbReference type="ChEBI" id="CHEBI:59789"/>
    </ligand>
</feature>
<feature type="binding site" evidence="1">
    <location>
        <position position="99"/>
    </location>
    <ligand>
        <name>GTP</name>
        <dbReference type="ChEBI" id="CHEBI:37565"/>
    </ligand>
</feature>
<feature type="binding site" evidence="1">
    <location>
        <position position="123"/>
    </location>
    <ligand>
        <name>S-adenosyl-L-methionine</name>
        <dbReference type="ChEBI" id="CHEBI:59789"/>
    </ligand>
</feature>
<feature type="binding site" evidence="1">
    <location>
        <position position="160"/>
    </location>
    <ligand>
        <name>GTP</name>
        <dbReference type="ChEBI" id="CHEBI:37565"/>
    </ligand>
</feature>
<feature type="binding site" evidence="1">
    <location>
        <position position="194"/>
    </location>
    <ligand>
        <name>S-adenosyl-L-methionine</name>
        <dbReference type="ChEBI" id="CHEBI:59789"/>
    </ligand>
</feature>
<feature type="binding site" evidence="1">
    <location>
        <position position="257"/>
    </location>
    <ligand>
        <name>[4Fe-4S] cluster</name>
        <dbReference type="ChEBI" id="CHEBI:49883"/>
        <label>2</label>
        <note>4Fe-4S-substrate</note>
    </ligand>
</feature>
<feature type="binding site" evidence="1">
    <location>
        <position position="260"/>
    </location>
    <ligand>
        <name>[4Fe-4S] cluster</name>
        <dbReference type="ChEBI" id="CHEBI:49883"/>
        <label>2</label>
        <note>4Fe-4S-substrate</note>
    </ligand>
</feature>
<feature type="binding site" evidence="1">
    <location>
        <begin position="262"/>
        <end position="264"/>
    </location>
    <ligand>
        <name>GTP</name>
        <dbReference type="ChEBI" id="CHEBI:37565"/>
    </ligand>
</feature>
<feature type="binding site" evidence="1">
    <location>
        <position position="274"/>
    </location>
    <ligand>
        <name>[4Fe-4S] cluster</name>
        <dbReference type="ChEBI" id="CHEBI:49883"/>
        <label>2</label>
        <note>4Fe-4S-substrate</note>
    </ligand>
</feature>
<protein>
    <recommendedName>
        <fullName evidence="1">GTP 3',8-cyclase</fullName>
        <ecNumber evidence="1">4.1.99.22</ecNumber>
    </recommendedName>
    <alternativeName>
        <fullName evidence="1">Molybdenum cofactor biosynthesis protein A</fullName>
    </alternativeName>
</protein>
<organism>
    <name type="scientific">Shigella dysenteriae serotype 1 (strain Sd197)</name>
    <dbReference type="NCBI Taxonomy" id="300267"/>
    <lineage>
        <taxon>Bacteria</taxon>
        <taxon>Pseudomonadati</taxon>
        <taxon>Pseudomonadota</taxon>
        <taxon>Gammaproteobacteria</taxon>
        <taxon>Enterobacterales</taxon>
        <taxon>Enterobacteriaceae</taxon>
        <taxon>Shigella</taxon>
    </lineage>
</organism>
<accession>Q32I50</accession>
<sequence length="329" mass="37274">MASQLTDAFARKFYYLRLSITDVCNFRCTYCLPDGYKPSGVTNKGFLTVDEIRRVTRAFASLGTEKVRLTGGEPSLRRDFTDIIAAVRENDAIRQIAVTTNGYRLERDVANWRDAGLTGINVSVDSLDARQFHAITGQDKFNQVMAGIDAAFEAGFEKVKVNTVLMRDVNHHQLDTFLNWIQHRPIQLRFIELMETGEGSELFRKHHISGQVLRDELLRRGWIHQLRQRSDGPAQVFCHPDYAGEIGLIMPYEKDFCATCNRLRVSSIGKLHLCLFGEGGVNLRDLLEDDAQQQALEARISAALREKKQTHFLHQNNTGITQNLSYIGG</sequence>
<name>MOAA_SHIDS</name>
<reference key="1">
    <citation type="journal article" date="2005" name="Nucleic Acids Res.">
        <title>Genome dynamics and diversity of Shigella species, the etiologic agents of bacillary dysentery.</title>
        <authorList>
            <person name="Yang F."/>
            <person name="Yang J."/>
            <person name="Zhang X."/>
            <person name="Chen L."/>
            <person name="Jiang Y."/>
            <person name="Yan Y."/>
            <person name="Tang X."/>
            <person name="Wang J."/>
            <person name="Xiong Z."/>
            <person name="Dong J."/>
            <person name="Xue Y."/>
            <person name="Zhu Y."/>
            <person name="Xu X."/>
            <person name="Sun L."/>
            <person name="Chen S."/>
            <person name="Nie H."/>
            <person name="Peng J."/>
            <person name="Xu J."/>
            <person name="Wang Y."/>
            <person name="Yuan Z."/>
            <person name="Wen Y."/>
            <person name="Yao Z."/>
            <person name="Shen Y."/>
            <person name="Qiang B."/>
            <person name="Hou Y."/>
            <person name="Yu J."/>
            <person name="Jin Q."/>
        </authorList>
    </citation>
    <scope>NUCLEOTIDE SEQUENCE [LARGE SCALE GENOMIC DNA]</scope>
    <source>
        <strain>Sd197</strain>
    </source>
</reference>
<comment type="function">
    <text evidence="1">Catalyzes the cyclization of GTP to (8S)-3',8-cyclo-7,8-dihydroguanosine 5'-triphosphate.</text>
</comment>
<comment type="catalytic activity">
    <reaction evidence="1">
        <text>GTP + AH2 + S-adenosyl-L-methionine = (8S)-3',8-cyclo-7,8-dihydroguanosine 5'-triphosphate + 5'-deoxyadenosine + L-methionine + A + H(+)</text>
        <dbReference type="Rhea" id="RHEA:49576"/>
        <dbReference type="ChEBI" id="CHEBI:13193"/>
        <dbReference type="ChEBI" id="CHEBI:15378"/>
        <dbReference type="ChEBI" id="CHEBI:17319"/>
        <dbReference type="ChEBI" id="CHEBI:17499"/>
        <dbReference type="ChEBI" id="CHEBI:37565"/>
        <dbReference type="ChEBI" id="CHEBI:57844"/>
        <dbReference type="ChEBI" id="CHEBI:59789"/>
        <dbReference type="ChEBI" id="CHEBI:131766"/>
        <dbReference type="EC" id="4.1.99.22"/>
    </reaction>
</comment>
<comment type="cofactor">
    <cofactor evidence="1">
        <name>[4Fe-4S] cluster</name>
        <dbReference type="ChEBI" id="CHEBI:49883"/>
    </cofactor>
    <text evidence="1">Binds 2 [4Fe-4S] clusters. Binds 1 [4Fe-4S] cluster coordinated with 3 cysteines and an exchangeable S-adenosyl-L-methionine and 1 [4Fe-4S] cluster coordinated with 3 cysteines and the GTP-derived substrate.</text>
</comment>
<comment type="pathway">
    <text evidence="1">Cofactor biosynthesis; molybdopterin biosynthesis.</text>
</comment>
<comment type="subunit">
    <text evidence="1">Monomer and homodimer.</text>
</comment>
<comment type="similarity">
    <text evidence="1">Belongs to the radical SAM superfamily. MoaA family.</text>
</comment>
<gene>
    <name evidence="1" type="primary">moaA</name>
    <name type="ordered locus">SDY_0825</name>
</gene>
<proteinExistence type="inferred from homology"/>
<dbReference type="EC" id="4.1.99.22" evidence="1"/>
<dbReference type="EMBL" id="CP000034">
    <property type="protein sequence ID" value="ABB61007.1"/>
    <property type="molecule type" value="Genomic_DNA"/>
</dbReference>
<dbReference type="RefSeq" id="WP_001408763.1">
    <property type="nucleotide sequence ID" value="NC_007606.1"/>
</dbReference>
<dbReference type="RefSeq" id="YP_402496.1">
    <property type="nucleotide sequence ID" value="NC_007606.1"/>
</dbReference>
<dbReference type="SMR" id="Q32I50"/>
<dbReference type="STRING" id="300267.SDY_0825"/>
<dbReference type="EnsemblBacteria" id="ABB61007">
    <property type="protein sequence ID" value="ABB61007"/>
    <property type="gene ID" value="SDY_0825"/>
</dbReference>
<dbReference type="KEGG" id="sdy:SDY_0825"/>
<dbReference type="PATRIC" id="fig|300267.13.peg.951"/>
<dbReference type="HOGENOM" id="CLU_009273_0_1_6"/>
<dbReference type="UniPathway" id="UPA00344"/>
<dbReference type="Proteomes" id="UP000002716">
    <property type="component" value="Chromosome"/>
</dbReference>
<dbReference type="GO" id="GO:0051539">
    <property type="term" value="F:4 iron, 4 sulfur cluster binding"/>
    <property type="evidence" value="ECO:0007669"/>
    <property type="project" value="UniProtKB-UniRule"/>
</dbReference>
<dbReference type="GO" id="GO:0061799">
    <property type="term" value="F:cyclic pyranopterin monophosphate synthase activity"/>
    <property type="evidence" value="ECO:0007669"/>
    <property type="project" value="TreeGrafter"/>
</dbReference>
<dbReference type="GO" id="GO:0061798">
    <property type="term" value="F:GTP 3',8'-cyclase activity"/>
    <property type="evidence" value="ECO:0007669"/>
    <property type="project" value="UniProtKB-UniRule"/>
</dbReference>
<dbReference type="GO" id="GO:0005525">
    <property type="term" value="F:GTP binding"/>
    <property type="evidence" value="ECO:0007669"/>
    <property type="project" value="UniProtKB-UniRule"/>
</dbReference>
<dbReference type="GO" id="GO:0046872">
    <property type="term" value="F:metal ion binding"/>
    <property type="evidence" value="ECO:0007669"/>
    <property type="project" value="UniProtKB-KW"/>
</dbReference>
<dbReference type="GO" id="GO:1904047">
    <property type="term" value="F:S-adenosyl-L-methionine binding"/>
    <property type="evidence" value="ECO:0007669"/>
    <property type="project" value="UniProtKB-UniRule"/>
</dbReference>
<dbReference type="GO" id="GO:0006777">
    <property type="term" value="P:Mo-molybdopterin cofactor biosynthetic process"/>
    <property type="evidence" value="ECO:0007669"/>
    <property type="project" value="UniProtKB-UniRule"/>
</dbReference>
<dbReference type="CDD" id="cd01335">
    <property type="entry name" value="Radical_SAM"/>
    <property type="match status" value="1"/>
</dbReference>
<dbReference type="CDD" id="cd21117">
    <property type="entry name" value="Twitch_MoaA"/>
    <property type="match status" value="1"/>
</dbReference>
<dbReference type="FunFam" id="3.20.20.70:FF:000057">
    <property type="entry name" value="GTP 3',8-cyclase"/>
    <property type="match status" value="1"/>
</dbReference>
<dbReference type="Gene3D" id="3.20.20.70">
    <property type="entry name" value="Aldolase class I"/>
    <property type="match status" value="1"/>
</dbReference>
<dbReference type="HAMAP" id="MF_01225_B">
    <property type="entry name" value="MoaA_B"/>
    <property type="match status" value="1"/>
</dbReference>
<dbReference type="InterPro" id="IPR013785">
    <property type="entry name" value="Aldolase_TIM"/>
</dbReference>
<dbReference type="InterPro" id="IPR006638">
    <property type="entry name" value="Elp3/MiaA/NifB-like_rSAM"/>
</dbReference>
<dbReference type="InterPro" id="IPR013483">
    <property type="entry name" value="MoaA"/>
</dbReference>
<dbReference type="InterPro" id="IPR000385">
    <property type="entry name" value="MoaA_NifB_PqqE_Fe-S-bd_CS"/>
</dbReference>
<dbReference type="InterPro" id="IPR010505">
    <property type="entry name" value="MoaA_twitch"/>
</dbReference>
<dbReference type="InterPro" id="IPR050105">
    <property type="entry name" value="MoCo_biosynth_MoaA/MoaC"/>
</dbReference>
<dbReference type="InterPro" id="IPR007197">
    <property type="entry name" value="rSAM"/>
</dbReference>
<dbReference type="NCBIfam" id="TIGR02666">
    <property type="entry name" value="moaA"/>
    <property type="match status" value="1"/>
</dbReference>
<dbReference type="PANTHER" id="PTHR22960:SF28">
    <property type="entry name" value="GTP 3',8-CYCLASE"/>
    <property type="match status" value="1"/>
</dbReference>
<dbReference type="PANTHER" id="PTHR22960">
    <property type="entry name" value="MOLYBDOPTERIN COFACTOR SYNTHESIS PROTEIN A"/>
    <property type="match status" value="1"/>
</dbReference>
<dbReference type="Pfam" id="PF13353">
    <property type="entry name" value="Fer4_12"/>
    <property type="match status" value="1"/>
</dbReference>
<dbReference type="Pfam" id="PF06463">
    <property type="entry name" value="Mob_synth_C"/>
    <property type="match status" value="1"/>
</dbReference>
<dbReference type="Pfam" id="PF04055">
    <property type="entry name" value="Radical_SAM"/>
    <property type="match status" value="1"/>
</dbReference>
<dbReference type="SFLD" id="SFLDG01383">
    <property type="entry name" value="cyclic_pyranopterin_phosphate"/>
    <property type="match status" value="1"/>
</dbReference>
<dbReference type="SFLD" id="SFLDG01216">
    <property type="entry name" value="thioether_bond_formation_requi"/>
    <property type="match status" value="1"/>
</dbReference>
<dbReference type="SMART" id="SM00729">
    <property type="entry name" value="Elp3"/>
    <property type="match status" value="1"/>
</dbReference>
<dbReference type="SUPFAM" id="SSF102114">
    <property type="entry name" value="Radical SAM enzymes"/>
    <property type="match status" value="1"/>
</dbReference>
<dbReference type="PROSITE" id="PS01305">
    <property type="entry name" value="MOAA_NIFB_PQQE"/>
    <property type="match status" value="1"/>
</dbReference>
<dbReference type="PROSITE" id="PS51918">
    <property type="entry name" value="RADICAL_SAM"/>
    <property type="match status" value="1"/>
</dbReference>